<organism>
    <name type="scientific">Drosophila melanogaster</name>
    <name type="common">Fruit fly</name>
    <dbReference type="NCBI Taxonomy" id="7227"/>
    <lineage>
        <taxon>Eukaryota</taxon>
        <taxon>Metazoa</taxon>
        <taxon>Ecdysozoa</taxon>
        <taxon>Arthropoda</taxon>
        <taxon>Hexapoda</taxon>
        <taxon>Insecta</taxon>
        <taxon>Pterygota</taxon>
        <taxon>Neoptera</taxon>
        <taxon>Endopterygota</taxon>
        <taxon>Diptera</taxon>
        <taxon>Brachycera</taxon>
        <taxon>Muscomorpha</taxon>
        <taxon>Ephydroidea</taxon>
        <taxon>Drosophilidae</taxon>
        <taxon>Drosophila</taxon>
        <taxon>Sophophora</taxon>
    </lineage>
</organism>
<evidence type="ECO:0000250" key="1"/>
<evidence type="ECO:0000255" key="2">
    <source>
        <dbReference type="PROSITE-ProRule" id="PRU00116"/>
    </source>
</evidence>
<evidence type="ECO:0000255" key="3">
    <source>
        <dbReference type="PROSITE-ProRule" id="PRU00448"/>
    </source>
</evidence>
<evidence type="ECO:0000256" key="4">
    <source>
        <dbReference type="SAM" id="MobiDB-lite"/>
    </source>
</evidence>
<evidence type="ECO:0000269" key="5">
    <source>
    </source>
</evidence>
<evidence type="ECO:0000305" key="6"/>
<evidence type="ECO:0007829" key="7">
    <source>
        <dbReference type="PDB" id="8JFY"/>
    </source>
</evidence>
<name>RDGC_DROME</name>
<comment type="function">
    <text evidence="5">Phosphatase required to prevent light-induced retinal degeneration.</text>
</comment>
<comment type="catalytic activity">
    <reaction>
        <text>O-phospho-L-seryl-[protein] + H2O = L-seryl-[protein] + phosphate</text>
        <dbReference type="Rhea" id="RHEA:20629"/>
        <dbReference type="Rhea" id="RHEA-COMP:9863"/>
        <dbReference type="Rhea" id="RHEA-COMP:11604"/>
        <dbReference type="ChEBI" id="CHEBI:15377"/>
        <dbReference type="ChEBI" id="CHEBI:29999"/>
        <dbReference type="ChEBI" id="CHEBI:43474"/>
        <dbReference type="ChEBI" id="CHEBI:83421"/>
        <dbReference type="EC" id="3.1.3.16"/>
    </reaction>
</comment>
<comment type="catalytic activity">
    <reaction>
        <text>O-phospho-L-threonyl-[protein] + H2O = L-threonyl-[protein] + phosphate</text>
        <dbReference type="Rhea" id="RHEA:47004"/>
        <dbReference type="Rhea" id="RHEA-COMP:11060"/>
        <dbReference type="Rhea" id="RHEA-COMP:11605"/>
        <dbReference type="ChEBI" id="CHEBI:15377"/>
        <dbReference type="ChEBI" id="CHEBI:30013"/>
        <dbReference type="ChEBI" id="CHEBI:43474"/>
        <dbReference type="ChEBI" id="CHEBI:61977"/>
        <dbReference type="EC" id="3.1.3.16"/>
    </reaction>
</comment>
<comment type="cofactor">
    <cofactor evidence="1">
        <name>Mn(2+)</name>
        <dbReference type="ChEBI" id="CHEBI:29035"/>
    </cofactor>
    <text evidence="1">Binds 2 manganese ions per subunit.</text>
</comment>
<comment type="tissue specificity">
    <text evidence="5">Expressed in the visual system of the fly, as well as in the mushroom bodies of the central brain.</text>
</comment>
<comment type="similarity">
    <text evidence="6">Belongs to the PPP phosphatase family.</text>
</comment>
<comment type="sequence caution" evidence="6">
    <conflict type="erroneous gene model prediction">
        <sequence resource="EMBL-CDS" id="AAF49044"/>
    </conflict>
</comment>
<comment type="sequence caution" evidence="6">
    <conflict type="erroneous gene model prediction">
        <sequence resource="EMBL-CDS" id="AAO41217"/>
    </conflict>
</comment>
<comment type="sequence caution" evidence="6">
    <conflict type="erroneous gene model prediction">
        <sequence resource="EMBL-CDS" id="AAO41218"/>
    </conflict>
</comment>
<comment type="sequence caution" evidence="6">
    <conflict type="erroneous initiation">
        <sequence resource="EMBL-CDS" id="AAV36844"/>
    </conflict>
    <text>Truncated N-terminus.</text>
</comment>
<comment type="sequence caution" evidence="6">
    <conflict type="miscellaneous discrepancy">
        <sequence resource="EMBL-CDS" id="AAV36844"/>
    </conflict>
    <text>Intron retention.</text>
</comment>
<proteinExistence type="evidence at protein level"/>
<gene>
    <name type="primary">rdgC</name>
    <name type="ORF">CG44746</name>
</gene>
<feature type="chain" id="PRO_0000058903" description="Serine/threonine-protein phosphatase rdgC">
    <location>
        <begin position="1"/>
        <end position="661"/>
    </location>
</feature>
<feature type="domain" description="IQ" evidence="2">
    <location>
        <begin position="7"/>
        <end position="32"/>
    </location>
</feature>
<feature type="domain" description="EF-hand 1" evidence="3">
    <location>
        <begin position="441"/>
        <end position="476"/>
    </location>
</feature>
<feature type="domain" description="EF-hand 2" evidence="3">
    <location>
        <begin position="526"/>
        <end position="561"/>
    </location>
</feature>
<feature type="domain" description="EF-hand 3" evidence="3">
    <location>
        <begin position="566"/>
        <end position="601"/>
    </location>
</feature>
<feature type="region of interest" description="Catalytic">
    <location>
        <begin position="105"/>
        <end position="413"/>
    </location>
</feature>
<feature type="region of interest" description="Disordered" evidence="4">
    <location>
        <begin position="606"/>
        <end position="625"/>
    </location>
</feature>
<feature type="active site" description="Proton donor" evidence="1">
    <location>
        <position position="220"/>
    </location>
</feature>
<feature type="binding site" evidence="1">
    <location>
        <position position="158"/>
    </location>
    <ligand>
        <name>Mn(2+)</name>
        <dbReference type="ChEBI" id="CHEBI:29035"/>
        <label>1</label>
    </ligand>
</feature>
<feature type="binding site" evidence="1">
    <location>
        <position position="160"/>
    </location>
    <ligand>
        <name>Mn(2+)</name>
        <dbReference type="ChEBI" id="CHEBI:29035"/>
        <label>1</label>
    </ligand>
</feature>
<feature type="binding site" evidence="1">
    <location>
        <position position="187"/>
    </location>
    <ligand>
        <name>Mn(2+)</name>
        <dbReference type="ChEBI" id="CHEBI:29035"/>
        <label>1</label>
    </ligand>
</feature>
<feature type="binding site" evidence="1">
    <location>
        <position position="187"/>
    </location>
    <ligand>
        <name>Mn(2+)</name>
        <dbReference type="ChEBI" id="CHEBI:29035"/>
        <label>2</label>
    </ligand>
</feature>
<feature type="binding site" evidence="1">
    <location>
        <position position="219"/>
    </location>
    <ligand>
        <name>Mn(2+)</name>
        <dbReference type="ChEBI" id="CHEBI:29035"/>
        <label>2</label>
    </ligand>
</feature>
<feature type="binding site" evidence="1">
    <location>
        <position position="271"/>
    </location>
    <ligand>
        <name>Mn(2+)</name>
        <dbReference type="ChEBI" id="CHEBI:29035"/>
        <label>2</label>
    </ligand>
</feature>
<feature type="binding site" evidence="1">
    <location>
        <position position="360"/>
    </location>
    <ligand>
        <name>Mn(2+)</name>
        <dbReference type="ChEBI" id="CHEBI:29035"/>
        <label>2</label>
    </ligand>
</feature>
<feature type="binding site" evidence="3">
    <location>
        <position position="539"/>
    </location>
    <ligand>
        <name>Ca(2+)</name>
        <dbReference type="ChEBI" id="CHEBI:29108"/>
        <label>1</label>
    </ligand>
</feature>
<feature type="binding site" evidence="3">
    <location>
        <position position="541"/>
    </location>
    <ligand>
        <name>Ca(2+)</name>
        <dbReference type="ChEBI" id="CHEBI:29108"/>
        <label>1</label>
    </ligand>
</feature>
<feature type="binding site" evidence="3">
    <location>
        <position position="543"/>
    </location>
    <ligand>
        <name>Ca(2+)</name>
        <dbReference type="ChEBI" id="CHEBI:29108"/>
        <label>1</label>
    </ligand>
</feature>
<feature type="binding site" evidence="3">
    <location>
        <position position="545"/>
    </location>
    <ligand>
        <name>Ca(2+)</name>
        <dbReference type="ChEBI" id="CHEBI:29108"/>
        <label>1</label>
    </ligand>
</feature>
<feature type="binding site" evidence="3">
    <location>
        <position position="550"/>
    </location>
    <ligand>
        <name>Ca(2+)</name>
        <dbReference type="ChEBI" id="CHEBI:29108"/>
        <label>1</label>
    </ligand>
</feature>
<feature type="binding site" evidence="3">
    <location>
        <position position="579"/>
    </location>
    <ligand>
        <name>Ca(2+)</name>
        <dbReference type="ChEBI" id="CHEBI:29108"/>
        <label>2</label>
    </ligand>
</feature>
<feature type="binding site" evidence="3">
    <location>
        <position position="581"/>
    </location>
    <ligand>
        <name>Ca(2+)</name>
        <dbReference type="ChEBI" id="CHEBI:29108"/>
        <label>2</label>
    </ligand>
</feature>
<feature type="binding site" evidence="3">
    <location>
        <position position="583"/>
    </location>
    <ligand>
        <name>Ca(2+)</name>
        <dbReference type="ChEBI" id="CHEBI:29108"/>
        <label>2</label>
    </ligand>
</feature>
<feature type="binding site" evidence="3">
    <location>
        <position position="585"/>
    </location>
    <ligand>
        <name>Ca(2+)</name>
        <dbReference type="ChEBI" id="CHEBI:29108"/>
        <label>2</label>
    </ligand>
</feature>
<feature type="binding site" evidence="3">
    <location>
        <position position="590"/>
    </location>
    <ligand>
        <name>Ca(2+)</name>
        <dbReference type="ChEBI" id="CHEBI:29108"/>
        <label>2</label>
    </ligand>
</feature>
<feature type="sequence conflict" description="In Ref. 4; AAV36844." evidence="6" ref="4">
    <original>D</original>
    <variation>G</variation>
    <location>
        <position position="522"/>
    </location>
</feature>
<feature type="helix" evidence="7">
    <location>
        <begin position="3"/>
        <end position="28"/>
    </location>
</feature>
<feature type="helix" evidence="7">
    <location>
        <begin position="31"/>
        <end position="43"/>
    </location>
</feature>
<feature type="helix" evidence="7">
    <location>
        <begin position="45"/>
        <end position="51"/>
    </location>
</feature>
<feature type="turn" evidence="7">
    <location>
        <begin position="52"/>
        <end position="58"/>
    </location>
</feature>
<feature type="helix" evidence="7">
    <location>
        <begin position="102"/>
        <end position="113"/>
    </location>
</feature>
<feature type="strand" evidence="7">
    <location>
        <begin position="115"/>
        <end position="117"/>
    </location>
</feature>
<feature type="helix" evidence="7">
    <location>
        <begin position="122"/>
        <end position="138"/>
    </location>
</feature>
<feature type="strand" evidence="7">
    <location>
        <begin position="141"/>
        <end position="145"/>
    </location>
</feature>
<feature type="turn" evidence="7">
    <location>
        <begin position="148"/>
        <end position="150"/>
    </location>
</feature>
<feature type="strand" evidence="7">
    <location>
        <begin position="151"/>
        <end position="156"/>
    </location>
</feature>
<feature type="helix" evidence="7">
    <location>
        <begin position="163"/>
        <end position="173"/>
    </location>
</feature>
<feature type="strand" evidence="7">
    <location>
        <begin position="182"/>
        <end position="184"/>
    </location>
</feature>
<feature type="strand" evidence="7">
    <location>
        <begin position="189"/>
        <end position="192"/>
    </location>
</feature>
<feature type="helix" evidence="7">
    <location>
        <begin position="195"/>
        <end position="208"/>
    </location>
</feature>
<feature type="turn" evidence="7">
    <location>
        <begin position="210"/>
        <end position="212"/>
    </location>
</feature>
<feature type="strand" evidence="7">
    <location>
        <begin position="213"/>
        <end position="215"/>
    </location>
</feature>
<feature type="helix" evidence="7">
    <location>
        <begin position="223"/>
        <end position="229"/>
    </location>
</feature>
<feature type="helix" evidence="7">
    <location>
        <begin position="231"/>
        <end position="238"/>
    </location>
</feature>
<feature type="turn" evidence="7">
    <location>
        <begin position="240"/>
        <end position="242"/>
    </location>
</feature>
<feature type="helix" evidence="7">
    <location>
        <begin position="243"/>
        <end position="256"/>
    </location>
</feature>
<feature type="strand" evidence="7">
    <location>
        <begin position="260"/>
        <end position="263"/>
    </location>
</feature>
<feature type="turn" evidence="7">
    <location>
        <begin position="264"/>
        <end position="266"/>
    </location>
</feature>
<feature type="strand" evidence="7">
    <location>
        <begin position="267"/>
        <end position="269"/>
    </location>
</feature>
<feature type="helix" evidence="7">
    <location>
        <begin position="280"/>
        <end position="283"/>
    </location>
</feature>
<feature type="turn" evidence="7">
    <location>
        <begin position="288"/>
        <end position="290"/>
    </location>
</feature>
<feature type="strand" evidence="7">
    <location>
        <begin position="294"/>
        <end position="296"/>
    </location>
</feature>
<feature type="helix" evidence="7">
    <location>
        <begin position="307"/>
        <end position="318"/>
    </location>
</feature>
<feature type="strand" evidence="7">
    <location>
        <begin position="323"/>
        <end position="329"/>
    </location>
</feature>
<feature type="turn" evidence="7">
    <location>
        <begin position="331"/>
        <end position="333"/>
    </location>
</feature>
<feature type="strand" evidence="7">
    <location>
        <begin position="334"/>
        <end position="339"/>
    </location>
</feature>
<feature type="helix" evidence="7">
    <location>
        <begin position="341"/>
        <end position="351"/>
    </location>
</feature>
<feature type="strand" evidence="7">
    <location>
        <begin position="354"/>
        <end position="358"/>
    </location>
</feature>
<feature type="strand" evidence="7">
    <location>
        <begin position="366"/>
        <end position="370"/>
    </location>
</feature>
<feature type="turn" evidence="7">
    <location>
        <begin position="371"/>
        <end position="374"/>
    </location>
</feature>
<feature type="strand" evidence="7">
    <location>
        <begin position="375"/>
        <end position="378"/>
    </location>
</feature>
<feature type="strand" evidence="7">
    <location>
        <begin position="382"/>
        <end position="386"/>
    </location>
</feature>
<feature type="strand" evidence="7">
    <location>
        <begin position="392"/>
        <end position="398"/>
    </location>
</feature>
<feature type="strand" evidence="7">
    <location>
        <begin position="403"/>
        <end position="408"/>
    </location>
</feature>
<feature type="helix" evidence="7">
    <location>
        <begin position="414"/>
        <end position="417"/>
    </location>
</feature>
<feature type="helix" evidence="7">
    <location>
        <begin position="428"/>
        <end position="438"/>
    </location>
</feature>
<feature type="helix" evidence="7">
    <location>
        <begin position="439"/>
        <end position="442"/>
    </location>
</feature>
<feature type="helix" evidence="7">
    <location>
        <begin position="443"/>
        <end position="453"/>
    </location>
</feature>
<feature type="strand" evidence="7">
    <location>
        <begin position="459"/>
        <end position="462"/>
    </location>
</feature>
<feature type="helix" evidence="7">
    <location>
        <begin position="463"/>
        <end position="473"/>
    </location>
</feature>
<feature type="helix" evidence="7">
    <location>
        <begin position="480"/>
        <end position="487"/>
    </location>
</feature>
<feature type="strand" evidence="7">
    <location>
        <begin position="493"/>
        <end position="497"/>
    </location>
</feature>
<feature type="helix" evidence="7">
    <location>
        <begin position="498"/>
        <end position="506"/>
    </location>
</feature>
<feature type="helix" evidence="7">
    <location>
        <begin position="508"/>
        <end position="512"/>
    </location>
</feature>
<feature type="helix" evidence="7">
    <location>
        <begin position="520"/>
        <end position="525"/>
    </location>
</feature>
<feature type="helix" evidence="7">
    <location>
        <begin position="531"/>
        <end position="538"/>
    </location>
</feature>
<feature type="helix" evidence="7">
    <location>
        <begin position="548"/>
        <end position="558"/>
    </location>
</feature>
<feature type="helix" evidence="7">
    <location>
        <begin position="568"/>
        <end position="578"/>
    </location>
</feature>
<feature type="strand" evidence="7">
    <location>
        <begin position="580"/>
        <end position="584"/>
    </location>
</feature>
<feature type="helix" evidence="7">
    <location>
        <begin position="588"/>
        <end position="604"/>
    </location>
</feature>
<accession>P40421</accession>
<accession>A4V255</accession>
<accession>Q5U1D3</accession>
<accession>Q9VWA4</accession>
<reference key="1">
    <citation type="journal article" date="1992" name="Cell">
        <title>Drosophila retinal degeneration C (rdgC) encodes a novel serine/threonine protein phosphatase.</title>
        <authorList>
            <person name="Steele F.R."/>
            <person name="Washburn T."/>
            <person name="Rieger R."/>
            <person name="O'Tousa J.E."/>
        </authorList>
    </citation>
    <scope>NUCLEOTIDE SEQUENCE [GENOMIC DNA]</scope>
    <scope>FUNCTION</scope>
    <scope>TISSUE SPECIFICITY</scope>
    <source>
        <strain>Oregon-R</strain>
    </source>
</reference>
<reference key="2">
    <citation type="journal article" date="2000" name="Science">
        <title>The genome sequence of Drosophila melanogaster.</title>
        <authorList>
            <person name="Adams M.D."/>
            <person name="Celniker S.E."/>
            <person name="Holt R.A."/>
            <person name="Evans C.A."/>
            <person name="Gocayne J.D."/>
            <person name="Amanatides P.G."/>
            <person name="Scherer S.E."/>
            <person name="Li P.W."/>
            <person name="Hoskins R.A."/>
            <person name="Galle R.F."/>
            <person name="George R.A."/>
            <person name="Lewis S.E."/>
            <person name="Richards S."/>
            <person name="Ashburner M."/>
            <person name="Henderson S.N."/>
            <person name="Sutton G.G."/>
            <person name="Wortman J.R."/>
            <person name="Yandell M.D."/>
            <person name="Zhang Q."/>
            <person name="Chen L.X."/>
            <person name="Brandon R.C."/>
            <person name="Rogers Y.-H.C."/>
            <person name="Blazej R.G."/>
            <person name="Champe M."/>
            <person name="Pfeiffer B.D."/>
            <person name="Wan K.H."/>
            <person name="Doyle C."/>
            <person name="Baxter E.G."/>
            <person name="Helt G."/>
            <person name="Nelson C.R."/>
            <person name="Miklos G.L.G."/>
            <person name="Abril J.F."/>
            <person name="Agbayani A."/>
            <person name="An H.-J."/>
            <person name="Andrews-Pfannkoch C."/>
            <person name="Baldwin D."/>
            <person name="Ballew R.M."/>
            <person name="Basu A."/>
            <person name="Baxendale J."/>
            <person name="Bayraktaroglu L."/>
            <person name="Beasley E.M."/>
            <person name="Beeson K.Y."/>
            <person name="Benos P.V."/>
            <person name="Berman B.P."/>
            <person name="Bhandari D."/>
            <person name="Bolshakov S."/>
            <person name="Borkova D."/>
            <person name="Botchan M.R."/>
            <person name="Bouck J."/>
            <person name="Brokstein P."/>
            <person name="Brottier P."/>
            <person name="Burtis K.C."/>
            <person name="Busam D.A."/>
            <person name="Butler H."/>
            <person name="Cadieu E."/>
            <person name="Center A."/>
            <person name="Chandra I."/>
            <person name="Cherry J.M."/>
            <person name="Cawley S."/>
            <person name="Dahlke C."/>
            <person name="Davenport L.B."/>
            <person name="Davies P."/>
            <person name="de Pablos B."/>
            <person name="Delcher A."/>
            <person name="Deng Z."/>
            <person name="Mays A.D."/>
            <person name="Dew I."/>
            <person name="Dietz S.M."/>
            <person name="Dodson K."/>
            <person name="Doup L.E."/>
            <person name="Downes M."/>
            <person name="Dugan-Rocha S."/>
            <person name="Dunkov B.C."/>
            <person name="Dunn P."/>
            <person name="Durbin K.J."/>
            <person name="Evangelista C.C."/>
            <person name="Ferraz C."/>
            <person name="Ferriera S."/>
            <person name="Fleischmann W."/>
            <person name="Fosler C."/>
            <person name="Gabrielian A.E."/>
            <person name="Garg N.S."/>
            <person name="Gelbart W.M."/>
            <person name="Glasser K."/>
            <person name="Glodek A."/>
            <person name="Gong F."/>
            <person name="Gorrell J.H."/>
            <person name="Gu Z."/>
            <person name="Guan P."/>
            <person name="Harris M."/>
            <person name="Harris N.L."/>
            <person name="Harvey D.A."/>
            <person name="Heiman T.J."/>
            <person name="Hernandez J.R."/>
            <person name="Houck J."/>
            <person name="Hostin D."/>
            <person name="Houston K.A."/>
            <person name="Howland T.J."/>
            <person name="Wei M.-H."/>
            <person name="Ibegwam C."/>
            <person name="Jalali M."/>
            <person name="Kalush F."/>
            <person name="Karpen G.H."/>
            <person name="Ke Z."/>
            <person name="Kennison J.A."/>
            <person name="Ketchum K.A."/>
            <person name="Kimmel B.E."/>
            <person name="Kodira C.D."/>
            <person name="Kraft C.L."/>
            <person name="Kravitz S."/>
            <person name="Kulp D."/>
            <person name="Lai Z."/>
            <person name="Lasko P."/>
            <person name="Lei Y."/>
            <person name="Levitsky A.A."/>
            <person name="Li J.H."/>
            <person name="Li Z."/>
            <person name="Liang Y."/>
            <person name="Lin X."/>
            <person name="Liu X."/>
            <person name="Mattei B."/>
            <person name="McIntosh T.C."/>
            <person name="McLeod M.P."/>
            <person name="McPherson D."/>
            <person name="Merkulov G."/>
            <person name="Milshina N.V."/>
            <person name="Mobarry C."/>
            <person name="Morris J."/>
            <person name="Moshrefi A."/>
            <person name="Mount S.M."/>
            <person name="Moy M."/>
            <person name="Murphy B."/>
            <person name="Murphy L."/>
            <person name="Muzny D.M."/>
            <person name="Nelson D.L."/>
            <person name="Nelson D.R."/>
            <person name="Nelson K.A."/>
            <person name="Nixon K."/>
            <person name="Nusskern D.R."/>
            <person name="Pacleb J.M."/>
            <person name="Palazzolo M."/>
            <person name="Pittman G.S."/>
            <person name="Pan S."/>
            <person name="Pollard J."/>
            <person name="Puri V."/>
            <person name="Reese M.G."/>
            <person name="Reinert K."/>
            <person name="Remington K."/>
            <person name="Saunders R.D.C."/>
            <person name="Scheeler F."/>
            <person name="Shen H."/>
            <person name="Shue B.C."/>
            <person name="Siden-Kiamos I."/>
            <person name="Simpson M."/>
            <person name="Skupski M.P."/>
            <person name="Smith T.J."/>
            <person name="Spier E."/>
            <person name="Spradling A.C."/>
            <person name="Stapleton M."/>
            <person name="Strong R."/>
            <person name="Sun E."/>
            <person name="Svirskas R."/>
            <person name="Tector C."/>
            <person name="Turner R."/>
            <person name="Venter E."/>
            <person name="Wang A.H."/>
            <person name="Wang X."/>
            <person name="Wang Z.-Y."/>
            <person name="Wassarman D.A."/>
            <person name="Weinstock G.M."/>
            <person name="Weissenbach J."/>
            <person name="Williams S.M."/>
            <person name="Woodage T."/>
            <person name="Worley K.C."/>
            <person name="Wu D."/>
            <person name="Yang S."/>
            <person name="Yao Q.A."/>
            <person name="Ye J."/>
            <person name="Yeh R.-F."/>
            <person name="Zaveri J.S."/>
            <person name="Zhan M."/>
            <person name="Zhang G."/>
            <person name="Zhao Q."/>
            <person name="Zheng L."/>
            <person name="Zheng X.H."/>
            <person name="Zhong F.N."/>
            <person name="Zhong W."/>
            <person name="Zhou X."/>
            <person name="Zhu S.C."/>
            <person name="Zhu X."/>
            <person name="Smith H.O."/>
            <person name="Gibbs R.A."/>
            <person name="Myers E.W."/>
            <person name="Rubin G.M."/>
            <person name="Venter J.C."/>
        </authorList>
    </citation>
    <scope>NUCLEOTIDE SEQUENCE [LARGE SCALE GENOMIC DNA]</scope>
    <source>
        <strain>Berkeley</strain>
    </source>
</reference>
<reference key="3">
    <citation type="journal article" date="2002" name="Genome Biol.">
        <title>Annotation of the Drosophila melanogaster euchromatic genome: a systematic review.</title>
        <authorList>
            <person name="Misra S."/>
            <person name="Crosby M.A."/>
            <person name="Mungall C.J."/>
            <person name="Matthews B.B."/>
            <person name="Campbell K.S."/>
            <person name="Hradecky P."/>
            <person name="Huang Y."/>
            <person name="Kaminker J.S."/>
            <person name="Millburn G.H."/>
            <person name="Prochnik S.E."/>
            <person name="Smith C.D."/>
            <person name="Tupy J.L."/>
            <person name="Whitfield E.J."/>
            <person name="Bayraktaroglu L."/>
            <person name="Berman B.P."/>
            <person name="Bettencourt B.R."/>
            <person name="Celniker S.E."/>
            <person name="de Grey A.D.N.J."/>
            <person name="Drysdale R.A."/>
            <person name="Harris N.L."/>
            <person name="Richter J."/>
            <person name="Russo S."/>
            <person name="Schroeder A.J."/>
            <person name="Shu S.Q."/>
            <person name="Stapleton M."/>
            <person name="Yamada C."/>
            <person name="Ashburner M."/>
            <person name="Gelbart W.M."/>
            <person name="Rubin G.M."/>
            <person name="Lewis S.E."/>
        </authorList>
    </citation>
    <scope>GENOME REANNOTATION</scope>
    <source>
        <strain>Berkeley</strain>
    </source>
</reference>
<reference key="4">
    <citation type="submission" date="2004-10" db="EMBL/GenBank/DDBJ databases">
        <authorList>
            <person name="Stapleton M."/>
            <person name="Carlson J.W."/>
            <person name="Chavez C."/>
            <person name="Frise E."/>
            <person name="George R.A."/>
            <person name="Pacleb J.M."/>
            <person name="Park S."/>
            <person name="Wan K.H."/>
            <person name="Yu C."/>
            <person name="Rubin G.M."/>
            <person name="Celniker S.E."/>
        </authorList>
    </citation>
    <scope>NUCLEOTIDE SEQUENCE [LARGE SCALE MRNA] OF 48-661</scope>
    <source>
        <strain>Berkeley</strain>
        <tissue>Head</tissue>
    </source>
</reference>
<keyword id="KW-0002">3D-structure</keyword>
<keyword id="KW-0106">Calcium</keyword>
<keyword id="KW-0378">Hydrolase</keyword>
<keyword id="KW-0460">Magnesium</keyword>
<keyword id="KW-0464">Manganese</keyword>
<keyword id="KW-0479">Metal-binding</keyword>
<keyword id="KW-0904">Protein phosphatase</keyword>
<keyword id="KW-1185">Reference proteome</keyword>
<keyword id="KW-0677">Repeat</keyword>
<keyword id="KW-0716">Sensory transduction</keyword>
<keyword id="KW-0844">Vision</keyword>
<dbReference type="EC" id="3.1.3.16"/>
<dbReference type="EMBL" id="M89628">
    <property type="protein sequence ID" value="AAB00734.1"/>
    <property type="molecule type" value="Genomic_DNA"/>
</dbReference>
<dbReference type="EMBL" id="AE014296">
    <property type="protein sequence ID" value="AAF49044.3"/>
    <property type="status" value="ALT_SEQ"/>
    <property type="molecule type" value="Genomic_DNA"/>
</dbReference>
<dbReference type="EMBL" id="AE014296">
    <property type="protein sequence ID" value="AAO41217.2"/>
    <property type="status" value="ALT_SEQ"/>
    <property type="molecule type" value="Genomic_DNA"/>
</dbReference>
<dbReference type="EMBL" id="AE014296">
    <property type="protein sequence ID" value="AAO41218.3"/>
    <property type="status" value="ALT_SEQ"/>
    <property type="molecule type" value="Genomic_DNA"/>
</dbReference>
<dbReference type="EMBL" id="BT015959">
    <property type="protein sequence ID" value="AAV36844.1"/>
    <property type="status" value="ALT_SEQ"/>
    <property type="molecule type" value="mRNA"/>
</dbReference>
<dbReference type="PIR" id="A42287">
    <property type="entry name" value="A42287"/>
</dbReference>
<dbReference type="RefSeq" id="NP_536738.3">
    <property type="nucleotide sequence ID" value="NM_080490.4"/>
</dbReference>
<dbReference type="RefSeq" id="NP_788544.2">
    <property type="nucleotide sequence ID" value="NM_176366.2"/>
</dbReference>
<dbReference type="RefSeq" id="NP_788545.3">
    <property type="nucleotide sequence ID" value="NM_176367.3"/>
</dbReference>
<dbReference type="RefSeq" id="NP_788546.1">
    <property type="nucleotide sequence ID" value="NM_176368.2"/>
</dbReference>
<dbReference type="PDB" id="8JFW">
    <property type="method" value="EM"/>
    <property type="resolution" value="3.64 A"/>
    <property type="chains" value="D=1-661"/>
</dbReference>
<dbReference type="PDB" id="8JFY">
    <property type="method" value="EM"/>
    <property type="resolution" value="2.79 A"/>
    <property type="chains" value="C/D=1-605"/>
</dbReference>
<dbReference type="PDBsum" id="8JFW"/>
<dbReference type="PDBsum" id="8JFY"/>
<dbReference type="EMDB" id="EMD-36218"/>
<dbReference type="EMDB" id="EMD-36219"/>
<dbReference type="SMR" id="P40421"/>
<dbReference type="BioGRID" id="65488">
    <property type="interactions" value="6"/>
</dbReference>
<dbReference type="FunCoup" id="P40421">
    <property type="interactions" value="83"/>
</dbReference>
<dbReference type="IntAct" id="P40421">
    <property type="interactions" value="1"/>
</dbReference>
<dbReference type="MINT" id="P40421"/>
<dbReference type="STRING" id="7227.FBpp0309721"/>
<dbReference type="PaxDb" id="7227-FBpp0074602"/>
<dbReference type="EnsemblMetazoa" id="FBtr0342946">
    <property type="protein sequence ID" value="FBpp0309720"/>
    <property type="gene ID" value="FBgn0265959"/>
</dbReference>
<dbReference type="GeneID" id="40224"/>
<dbReference type="KEGG" id="dme:Dmel_CG44746"/>
<dbReference type="AGR" id="FB:FBgn0265959"/>
<dbReference type="CTD" id="40224"/>
<dbReference type="FlyBase" id="FBgn0265959">
    <property type="gene designation" value="rdgC"/>
</dbReference>
<dbReference type="VEuPathDB" id="VectorBase:FBgn0265959"/>
<dbReference type="eggNOG" id="KOG0377">
    <property type="taxonomic scope" value="Eukaryota"/>
</dbReference>
<dbReference type="GeneTree" id="ENSGT00940000169749"/>
<dbReference type="HOGENOM" id="CLU_012603_1_0_1"/>
<dbReference type="InParanoid" id="P40421"/>
<dbReference type="OrthoDB" id="442428at2759"/>
<dbReference type="PhylomeDB" id="P40421"/>
<dbReference type="BioGRID-ORCS" id="40224">
    <property type="hits" value="0 hits in 3 CRISPR screens"/>
</dbReference>
<dbReference type="ChiTaRS" id="rdgC">
    <property type="organism name" value="fly"/>
</dbReference>
<dbReference type="GenomeRNAi" id="40224"/>
<dbReference type="PRO" id="PR:P40421"/>
<dbReference type="Proteomes" id="UP000000803">
    <property type="component" value="Chromosome 3L"/>
</dbReference>
<dbReference type="Bgee" id="FBgn0265959">
    <property type="expression patterns" value="Expressed in outer photoreceptor cell (Drosophila) in insect head and 121 other cell types or tissues"/>
</dbReference>
<dbReference type="ExpressionAtlas" id="P40421">
    <property type="expression patterns" value="baseline and differential"/>
</dbReference>
<dbReference type="GO" id="GO:0005737">
    <property type="term" value="C:cytoplasm"/>
    <property type="evidence" value="ECO:0000250"/>
    <property type="project" value="FlyBase"/>
</dbReference>
<dbReference type="GO" id="GO:0005829">
    <property type="term" value="C:cytosol"/>
    <property type="evidence" value="ECO:0000318"/>
    <property type="project" value="GO_Central"/>
</dbReference>
<dbReference type="GO" id="GO:0005634">
    <property type="term" value="C:nucleus"/>
    <property type="evidence" value="ECO:0000250"/>
    <property type="project" value="FlyBase"/>
</dbReference>
<dbReference type="GO" id="GO:0005509">
    <property type="term" value="F:calcium ion binding"/>
    <property type="evidence" value="ECO:0007669"/>
    <property type="project" value="InterPro"/>
</dbReference>
<dbReference type="GO" id="GO:0004723">
    <property type="term" value="F:calcium-dependent protein serine/threonine phosphatase activity"/>
    <property type="evidence" value="ECO:0000315"/>
    <property type="project" value="FlyBase"/>
</dbReference>
<dbReference type="GO" id="GO:0005516">
    <property type="term" value="F:calmodulin binding"/>
    <property type="evidence" value="ECO:0000314"/>
    <property type="project" value="FlyBase"/>
</dbReference>
<dbReference type="GO" id="GO:0005506">
    <property type="term" value="F:iron ion binding"/>
    <property type="evidence" value="ECO:0007669"/>
    <property type="project" value="InterPro"/>
</dbReference>
<dbReference type="GO" id="GO:0030145">
    <property type="term" value="F:manganese ion binding"/>
    <property type="evidence" value="ECO:0007669"/>
    <property type="project" value="InterPro"/>
</dbReference>
<dbReference type="GO" id="GO:0004722">
    <property type="term" value="F:protein serine/threonine phosphatase activity"/>
    <property type="evidence" value="ECO:0000250"/>
    <property type="project" value="FlyBase"/>
</dbReference>
<dbReference type="GO" id="GO:0019722">
    <property type="term" value="P:calcium-mediated signaling"/>
    <property type="evidence" value="ECO:0000304"/>
    <property type="project" value="FlyBase"/>
</dbReference>
<dbReference type="GO" id="GO:0050906">
    <property type="term" value="P:detection of stimulus involved in sensory perception"/>
    <property type="evidence" value="ECO:0007669"/>
    <property type="project" value="InterPro"/>
</dbReference>
<dbReference type="GO" id="GO:0016059">
    <property type="term" value="P:negative regulation of opsin-mediated signaling pathway"/>
    <property type="evidence" value="ECO:0000315"/>
    <property type="project" value="FlyBase"/>
</dbReference>
<dbReference type="GO" id="GO:0007602">
    <property type="term" value="P:phototransduction"/>
    <property type="evidence" value="ECO:0000315"/>
    <property type="project" value="FlyBase"/>
</dbReference>
<dbReference type="GO" id="GO:0043052">
    <property type="term" value="P:thermotaxis"/>
    <property type="evidence" value="ECO:0000314"/>
    <property type="project" value="FlyBase"/>
</dbReference>
<dbReference type="GO" id="GO:0007601">
    <property type="term" value="P:visual perception"/>
    <property type="evidence" value="ECO:0007669"/>
    <property type="project" value="UniProtKB-KW"/>
</dbReference>
<dbReference type="CDD" id="cd00051">
    <property type="entry name" value="EFh"/>
    <property type="match status" value="1"/>
</dbReference>
<dbReference type="CDD" id="cd23767">
    <property type="entry name" value="IQCD"/>
    <property type="match status" value="1"/>
</dbReference>
<dbReference type="FunFam" id="1.10.238.10:FF:000448">
    <property type="entry name" value="Serine/threonine-protein phosphatase with EF-hands"/>
    <property type="match status" value="1"/>
</dbReference>
<dbReference type="FunFam" id="3.60.21.10:FF:000056">
    <property type="entry name" value="Serine/threonine-protein phosphatase with EF-hands"/>
    <property type="match status" value="1"/>
</dbReference>
<dbReference type="Gene3D" id="3.60.21.10">
    <property type="match status" value="1"/>
</dbReference>
<dbReference type="Gene3D" id="1.10.238.10">
    <property type="entry name" value="EF-hand"/>
    <property type="match status" value="1"/>
</dbReference>
<dbReference type="InterPro" id="IPR004843">
    <property type="entry name" value="Calcineurin-like_PHP_ApaH"/>
</dbReference>
<dbReference type="InterPro" id="IPR011992">
    <property type="entry name" value="EF-hand-dom_pair"/>
</dbReference>
<dbReference type="InterPro" id="IPR018247">
    <property type="entry name" value="EF_Hand_1_Ca_BS"/>
</dbReference>
<dbReference type="InterPro" id="IPR002048">
    <property type="entry name" value="EF_hand_dom"/>
</dbReference>
<dbReference type="InterPro" id="IPR000048">
    <property type="entry name" value="IQ_motif_EF-hand-BS"/>
</dbReference>
<dbReference type="InterPro" id="IPR029052">
    <property type="entry name" value="Metallo-depent_PP-like"/>
</dbReference>
<dbReference type="InterPro" id="IPR051134">
    <property type="entry name" value="PPP_phosphatase"/>
</dbReference>
<dbReference type="InterPro" id="IPR012008">
    <property type="entry name" value="Ser/Thr-Pase_EF-hand_contain"/>
</dbReference>
<dbReference type="InterPro" id="IPR006186">
    <property type="entry name" value="Ser/Thr-sp_prot-phosphatase"/>
</dbReference>
<dbReference type="PANTHER" id="PTHR45668">
    <property type="entry name" value="SERINE/THREONINE-PROTEIN PHOSPHATASE 5-RELATED"/>
    <property type="match status" value="1"/>
</dbReference>
<dbReference type="PANTHER" id="PTHR45668:SF3">
    <property type="entry name" value="SERINE_THREONINE-PROTEIN PHOSPHATASE RDGC"/>
    <property type="match status" value="1"/>
</dbReference>
<dbReference type="Pfam" id="PF13499">
    <property type="entry name" value="EF-hand_7"/>
    <property type="match status" value="1"/>
</dbReference>
<dbReference type="Pfam" id="PF00149">
    <property type="entry name" value="Metallophos"/>
    <property type="match status" value="1"/>
</dbReference>
<dbReference type="PIRSF" id="PIRSF000912">
    <property type="entry name" value="PPEF"/>
    <property type="match status" value="1"/>
</dbReference>
<dbReference type="PRINTS" id="PR00114">
    <property type="entry name" value="STPHPHTASE"/>
</dbReference>
<dbReference type="SMART" id="SM00054">
    <property type="entry name" value="EFh"/>
    <property type="match status" value="3"/>
</dbReference>
<dbReference type="SMART" id="SM00015">
    <property type="entry name" value="IQ"/>
    <property type="match status" value="1"/>
</dbReference>
<dbReference type="SMART" id="SM00156">
    <property type="entry name" value="PP2Ac"/>
    <property type="match status" value="1"/>
</dbReference>
<dbReference type="SUPFAM" id="SSF47473">
    <property type="entry name" value="EF-hand"/>
    <property type="match status" value="1"/>
</dbReference>
<dbReference type="SUPFAM" id="SSF56300">
    <property type="entry name" value="Metallo-dependent phosphatases"/>
    <property type="match status" value="1"/>
</dbReference>
<dbReference type="PROSITE" id="PS00018">
    <property type="entry name" value="EF_HAND_1"/>
    <property type="match status" value="2"/>
</dbReference>
<dbReference type="PROSITE" id="PS50222">
    <property type="entry name" value="EF_HAND_2"/>
    <property type="match status" value="3"/>
</dbReference>
<dbReference type="PROSITE" id="PS50096">
    <property type="entry name" value="IQ"/>
    <property type="match status" value="1"/>
</dbReference>
<dbReference type="PROSITE" id="PS00125">
    <property type="entry name" value="SER_THR_PHOSPHATASE"/>
    <property type="match status" value="1"/>
</dbReference>
<sequence>MDENAIRAAIFIQKWYRRHQARREMQRRCNWQIFQNLEYASEQDQAELYKFFNDLIKHMPQAAGRKNQYQGSAHVSVLDDKDDLVEEFGDIVNAKIELPIRKNHIDLLIDVFRKKRGNRLHPKYVALILREAAKSLKQLPNISPVSTAVSQQVTVCGDLHGKLDDLLVVLHKNGLPSSSNPYVFNGDFVDRGKRGLEVLLLLLSLYLAFPNAVFLNRGNHEDSVMNARYGFIREVESKYPRNHKRILAFIDEVYRWLPLGSVLNSRVLIVHGGFSDSTSLDLIKSIDRGKYVSILRPPLTDGEPLDKTEWQQIFDIMWSDPQATMGCVPNTLRGAGVWFGPDVTDNFLQRHRLSYVIRSHECKPNGHEFMHDNKIITIFSASNYYAIGSNKGAYIRLNNQLMPHFVQYISAASQTKRLSFKQRMGIVESSALKELAVRMRDHRDELEDEFRKYDPKDSGYISISHWCKVMENVTKLGLPWRLLRDKLAPGTDSQKVNYNRTLDLLDTDVILEAEADGMSVMDALYANKASLVAIFNIIDADNSGEITLDEFETAIDLLVAHMPGAYSKAEMLEKCRMMDLNGDGKVDLNEFLEAFRLSDLHRKEQQDENIRRRSTGRPSVAKTATDPVTLLADKISKNTLVVEHDIDPTDCESKVIDPKKS</sequence>
<protein>
    <recommendedName>
        <fullName>Serine/threonine-protein phosphatase rdgC</fullName>
        <ecNumber>3.1.3.16</ecNumber>
    </recommendedName>
    <alternativeName>
        <fullName>Retinal degeneration C protein</fullName>
    </alternativeName>
</protein>